<protein>
    <recommendedName>
        <fullName evidence="1">Endoribonuclease YbeY</fullName>
        <ecNumber evidence="1">3.1.-.-</ecNumber>
    </recommendedName>
</protein>
<organism>
    <name type="scientific">Nitrobacter winogradskyi (strain ATCC 25391 / DSM 10237 / CIP 104748 / NCIMB 11846 / Nb-255)</name>
    <dbReference type="NCBI Taxonomy" id="323098"/>
    <lineage>
        <taxon>Bacteria</taxon>
        <taxon>Pseudomonadati</taxon>
        <taxon>Pseudomonadota</taxon>
        <taxon>Alphaproteobacteria</taxon>
        <taxon>Hyphomicrobiales</taxon>
        <taxon>Nitrobacteraceae</taxon>
        <taxon>Nitrobacter</taxon>
    </lineage>
</organism>
<evidence type="ECO:0000255" key="1">
    <source>
        <dbReference type="HAMAP-Rule" id="MF_00009"/>
    </source>
</evidence>
<proteinExistence type="inferred from homology"/>
<dbReference type="EC" id="3.1.-.-" evidence="1"/>
<dbReference type="EMBL" id="CP000115">
    <property type="protein sequence ID" value="ABA03284.1"/>
    <property type="molecule type" value="Genomic_DNA"/>
</dbReference>
<dbReference type="SMR" id="Q3SWQ7"/>
<dbReference type="STRING" id="323098.Nwi_0016"/>
<dbReference type="KEGG" id="nwi:Nwi_0016"/>
<dbReference type="eggNOG" id="COG0319">
    <property type="taxonomic scope" value="Bacteria"/>
</dbReference>
<dbReference type="HOGENOM" id="CLU_106710_0_0_5"/>
<dbReference type="Proteomes" id="UP000002531">
    <property type="component" value="Chromosome"/>
</dbReference>
<dbReference type="GO" id="GO:0005737">
    <property type="term" value="C:cytoplasm"/>
    <property type="evidence" value="ECO:0007669"/>
    <property type="project" value="UniProtKB-SubCell"/>
</dbReference>
<dbReference type="GO" id="GO:0004222">
    <property type="term" value="F:metalloendopeptidase activity"/>
    <property type="evidence" value="ECO:0007669"/>
    <property type="project" value="InterPro"/>
</dbReference>
<dbReference type="GO" id="GO:0004521">
    <property type="term" value="F:RNA endonuclease activity"/>
    <property type="evidence" value="ECO:0007669"/>
    <property type="project" value="UniProtKB-UniRule"/>
</dbReference>
<dbReference type="GO" id="GO:0008270">
    <property type="term" value="F:zinc ion binding"/>
    <property type="evidence" value="ECO:0007669"/>
    <property type="project" value="UniProtKB-UniRule"/>
</dbReference>
<dbReference type="GO" id="GO:0006364">
    <property type="term" value="P:rRNA processing"/>
    <property type="evidence" value="ECO:0007669"/>
    <property type="project" value="UniProtKB-UniRule"/>
</dbReference>
<dbReference type="Gene3D" id="3.40.390.30">
    <property type="entry name" value="Metalloproteases ('zincins'), catalytic domain"/>
    <property type="match status" value="1"/>
</dbReference>
<dbReference type="HAMAP" id="MF_00009">
    <property type="entry name" value="Endoribonucl_YbeY"/>
    <property type="match status" value="1"/>
</dbReference>
<dbReference type="InterPro" id="IPR023091">
    <property type="entry name" value="MetalPrtase_cat_dom_sf_prd"/>
</dbReference>
<dbReference type="InterPro" id="IPR002036">
    <property type="entry name" value="YbeY"/>
</dbReference>
<dbReference type="InterPro" id="IPR020549">
    <property type="entry name" value="YbeY_CS"/>
</dbReference>
<dbReference type="NCBIfam" id="TIGR00043">
    <property type="entry name" value="rRNA maturation RNase YbeY"/>
    <property type="match status" value="1"/>
</dbReference>
<dbReference type="PANTHER" id="PTHR46986">
    <property type="entry name" value="ENDORIBONUCLEASE YBEY, CHLOROPLASTIC"/>
    <property type="match status" value="1"/>
</dbReference>
<dbReference type="PANTHER" id="PTHR46986:SF1">
    <property type="entry name" value="ENDORIBONUCLEASE YBEY, CHLOROPLASTIC"/>
    <property type="match status" value="1"/>
</dbReference>
<dbReference type="Pfam" id="PF02130">
    <property type="entry name" value="YbeY"/>
    <property type="match status" value="1"/>
</dbReference>
<dbReference type="SUPFAM" id="SSF55486">
    <property type="entry name" value="Metalloproteases ('zincins'), catalytic domain"/>
    <property type="match status" value="1"/>
</dbReference>
<dbReference type="PROSITE" id="PS01306">
    <property type="entry name" value="UPF0054"/>
    <property type="match status" value="1"/>
</dbReference>
<comment type="function">
    <text evidence="1">Single strand-specific metallo-endoribonuclease involved in late-stage 70S ribosome quality control and in maturation of the 3' terminus of the 16S rRNA.</text>
</comment>
<comment type="cofactor">
    <cofactor evidence="1">
        <name>Zn(2+)</name>
        <dbReference type="ChEBI" id="CHEBI:29105"/>
    </cofactor>
    <text evidence="1">Binds 1 zinc ion.</text>
</comment>
<comment type="subcellular location">
    <subcellularLocation>
        <location evidence="1">Cytoplasm</location>
    </subcellularLocation>
</comment>
<comment type="similarity">
    <text evidence="1">Belongs to the endoribonuclease YbeY family.</text>
</comment>
<gene>
    <name evidence="1" type="primary">ybeY</name>
    <name type="ordered locus">Nwi_0016</name>
</gene>
<name>YBEY_NITWN</name>
<feature type="chain" id="PRO_0000284256" description="Endoribonuclease YbeY">
    <location>
        <begin position="1"/>
        <end position="190"/>
    </location>
</feature>
<feature type="binding site" evidence="1">
    <location>
        <position position="147"/>
    </location>
    <ligand>
        <name>Zn(2+)</name>
        <dbReference type="ChEBI" id="CHEBI:29105"/>
        <note>catalytic</note>
    </ligand>
</feature>
<feature type="binding site" evidence="1">
    <location>
        <position position="151"/>
    </location>
    <ligand>
        <name>Zn(2+)</name>
        <dbReference type="ChEBI" id="CHEBI:29105"/>
        <note>catalytic</note>
    </ligand>
</feature>
<feature type="binding site" evidence="1">
    <location>
        <position position="157"/>
    </location>
    <ligand>
        <name>Zn(2+)</name>
        <dbReference type="ChEBI" id="CHEBI:29105"/>
        <note>catalytic</note>
    </ligand>
</feature>
<keyword id="KW-0963">Cytoplasm</keyword>
<keyword id="KW-0255">Endonuclease</keyword>
<keyword id="KW-0378">Hydrolase</keyword>
<keyword id="KW-0479">Metal-binding</keyword>
<keyword id="KW-0540">Nuclease</keyword>
<keyword id="KW-1185">Reference proteome</keyword>
<keyword id="KW-0690">Ribosome biogenesis</keyword>
<keyword id="KW-0698">rRNA processing</keyword>
<keyword id="KW-0862">Zinc</keyword>
<sequence>MPNITCREQPARARRGGEKHIMIRSATPVTEILVVADCWRAEAGAEAVIHRAIATAAGMVDKDTGDAELAIMLTDDAGIRTLNANWRGLDKPTNVLSFPALQPTGPCLPDDPPRMLGDIAIAYETLRREAGDERKTFDHHLSHLAVHGFLHLIGYDHETDGEAEEMESLERQILAQLGIPDPYAPPERMT</sequence>
<accession>Q3SWQ7</accession>
<reference key="1">
    <citation type="journal article" date="2006" name="Appl. Environ. Microbiol.">
        <title>Genome sequence of the chemolithoautotrophic nitrite-oxidizing bacterium Nitrobacter winogradskyi Nb-255.</title>
        <authorList>
            <person name="Starkenburg S.R."/>
            <person name="Chain P.S.G."/>
            <person name="Sayavedra-Soto L.A."/>
            <person name="Hauser L."/>
            <person name="Land M.L."/>
            <person name="Larimer F.W."/>
            <person name="Malfatti S.A."/>
            <person name="Klotz M.G."/>
            <person name="Bottomley P.J."/>
            <person name="Arp D.J."/>
            <person name="Hickey W.J."/>
        </authorList>
    </citation>
    <scope>NUCLEOTIDE SEQUENCE [LARGE SCALE GENOMIC DNA]</scope>
    <source>
        <strain>ATCC 25391 / DSM 10237 / CIP 104748 / NCIMB 11846 / Nb-255</strain>
    </source>
</reference>